<feature type="chain" id="PRO_0000173309" description="Transposase for insertion sequence element IS231E">
    <location>
        <begin position="1"/>
        <end position="478"/>
    </location>
</feature>
<name>T231E_BACTF</name>
<keyword id="KW-0233">DNA recombination</keyword>
<keyword id="KW-0238">DNA-binding</keyword>
<keyword id="KW-0814">Transposable element</keyword>
<keyword id="KW-0815">Transposition</keyword>
<organism>
    <name type="scientific">Bacillus thuringiensis subsp. finitimus</name>
    <dbReference type="NCBI Taxonomy" id="29337"/>
    <lineage>
        <taxon>Bacteria</taxon>
        <taxon>Bacillati</taxon>
        <taxon>Bacillota</taxon>
        <taxon>Bacilli</taxon>
        <taxon>Bacillales</taxon>
        <taxon>Bacillaceae</taxon>
        <taxon>Bacillus</taxon>
        <taxon>Bacillus cereus group</taxon>
    </lineage>
</organism>
<dbReference type="EMBL" id="X63384">
    <property type="protein sequence ID" value="CAA44990.1"/>
    <property type="molecule type" value="Genomic_DNA"/>
</dbReference>
<dbReference type="PIR" id="S25821">
    <property type="entry name" value="S25821"/>
</dbReference>
<dbReference type="OMA" id="KYQLFAR"/>
<dbReference type="GO" id="GO:0003677">
    <property type="term" value="F:DNA binding"/>
    <property type="evidence" value="ECO:0007669"/>
    <property type="project" value="UniProtKB-KW"/>
</dbReference>
<dbReference type="GO" id="GO:0004803">
    <property type="term" value="F:transposase activity"/>
    <property type="evidence" value="ECO:0007669"/>
    <property type="project" value="InterPro"/>
</dbReference>
<dbReference type="GO" id="GO:0006313">
    <property type="term" value="P:DNA transposition"/>
    <property type="evidence" value="ECO:0007669"/>
    <property type="project" value="InterPro"/>
</dbReference>
<dbReference type="Gene3D" id="3.90.350.10">
    <property type="entry name" value="Transposase Inhibitor Protein From Tn5, Chain A, domain 1"/>
    <property type="match status" value="1"/>
</dbReference>
<dbReference type="InterPro" id="IPR012337">
    <property type="entry name" value="RNaseH-like_sf"/>
</dbReference>
<dbReference type="InterPro" id="IPR047952">
    <property type="entry name" value="Transpos_IS4"/>
</dbReference>
<dbReference type="InterPro" id="IPR002559">
    <property type="entry name" value="Transposase_11"/>
</dbReference>
<dbReference type="NCBIfam" id="NF033592">
    <property type="entry name" value="transpos_IS4_1"/>
    <property type="match status" value="1"/>
</dbReference>
<dbReference type="PANTHER" id="PTHR33258">
    <property type="entry name" value="TRANSPOSASE INSL FOR INSERTION SEQUENCE ELEMENT IS186A-RELATED"/>
    <property type="match status" value="1"/>
</dbReference>
<dbReference type="PANTHER" id="PTHR33258:SF1">
    <property type="entry name" value="TRANSPOSASE INSL FOR INSERTION SEQUENCE ELEMENT IS186A-RELATED"/>
    <property type="match status" value="1"/>
</dbReference>
<dbReference type="Pfam" id="PF01609">
    <property type="entry name" value="DDE_Tnp_1"/>
    <property type="match status" value="1"/>
</dbReference>
<dbReference type="SUPFAM" id="SSF53098">
    <property type="entry name" value="Ribonuclease H-like"/>
    <property type="match status" value="1"/>
</dbReference>
<accession>Q02403</accession>
<reference key="1">
    <citation type="journal article" date="1992" name="Mol. Microbiol.">
        <title>IS231D, E and F, three new insertion sequences in Bacillus thuringiensis: extension of the IS231 family.</title>
        <authorList>
            <person name="Rezsoehazy R."/>
            <person name="Hallet B."/>
            <person name="Delcour J."/>
        </authorList>
    </citation>
    <scope>NUCLEOTIDE SEQUENCE [GENOMIC DNA]</scope>
    <source>
        <strain>Serotype 2</strain>
    </source>
</reference>
<comment type="function">
    <text>Involved in the transposition of the insertion sequence.</text>
</comment>
<comment type="similarity">
    <text evidence="1">Belongs to the transposase 11 family.</text>
</comment>
<evidence type="ECO:0000305" key="1"/>
<proteinExistence type="inferred from homology"/>
<protein>
    <recommendedName>
        <fullName>Transposase for insertion sequence element IS231E</fullName>
    </recommendedName>
</protein>
<sequence length="478" mass="56088">MNLSIQGELQLFAEELHQHLTPSFLENLARELTFVKRKRKFSGHDLAIICVWVSQRVASDSLVRLCSQLHAVTGTLMSPEGLNKRFNKKAVCFLKHIFSTLLKNKICETSLIPSSSITYFQRIRILDATIFQVPKHLANVYPGSGGCAQTAGIKIQLEYDLHSGQFLNFQVEPGKNNDKTFGTECLATLRPGDLCIRDLGYYSLDDLDQMDQRGVYYISRLKLNNMVYIKNEFPEYFRNGIVKKQSQYIKVDLEHIMNTLKPGQVHEITEAYIGKDKKLFTRVIIYRLTEKQLRERKKKQVYTESKKGITYSEKSKRLAGMNIYVTNTPLEWVPMEQIHDFYSLRWQIEIIFKTWKSLFQIHDWQNIKRERLECHIYGKLIAIFLCSSTMFKMRQLILQKKKRELSEYKAIGMIQDHLYILYQAIQQNTQEITRILIRLFHLLQKNGRKSHRYEKKTVFDILGVVYEYTGLIKQKKIA</sequence>